<proteinExistence type="inferred from homology"/>
<name>RBSD_BACAC</name>
<keyword id="KW-0119">Carbohydrate metabolism</keyword>
<keyword id="KW-0963">Cytoplasm</keyword>
<keyword id="KW-0413">Isomerase</keyword>
<accession>C3LG97</accession>
<evidence type="ECO:0000255" key="1">
    <source>
        <dbReference type="HAMAP-Rule" id="MF_01661"/>
    </source>
</evidence>
<protein>
    <recommendedName>
        <fullName evidence="1">D-ribose pyranase</fullName>
        <ecNumber evidence="1">5.4.99.62</ecNumber>
    </recommendedName>
</protein>
<gene>
    <name evidence="1" type="primary">rbsD</name>
    <name type="ordered locus">BAMEG_3920</name>
</gene>
<comment type="function">
    <text evidence="1">Catalyzes the interconversion of beta-pyran and beta-furan forms of D-ribose.</text>
</comment>
<comment type="catalytic activity">
    <reaction evidence="1">
        <text>beta-D-ribopyranose = beta-D-ribofuranose</text>
        <dbReference type="Rhea" id="RHEA:25432"/>
        <dbReference type="ChEBI" id="CHEBI:27476"/>
        <dbReference type="ChEBI" id="CHEBI:47002"/>
        <dbReference type="EC" id="5.4.99.62"/>
    </reaction>
</comment>
<comment type="pathway">
    <text evidence="1">Carbohydrate metabolism; D-ribose degradation; D-ribose 5-phosphate from beta-D-ribopyranose: step 1/2.</text>
</comment>
<comment type="subunit">
    <text evidence="1">Homodecamer.</text>
</comment>
<comment type="subcellular location">
    <subcellularLocation>
        <location evidence="1">Cytoplasm</location>
    </subcellularLocation>
</comment>
<comment type="similarity">
    <text evidence="1">Belongs to the RbsD / FucU family. RbsD subfamily.</text>
</comment>
<feature type="chain" id="PRO_1000187129" description="D-ribose pyranase">
    <location>
        <begin position="1"/>
        <end position="131"/>
    </location>
</feature>
<feature type="active site" description="Proton donor" evidence="1">
    <location>
        <position position="20"/>
    </location>
</feature>
<feature type="binding site" evidence="1">
    <location>
        <position position="28"/>
    </location>
    <ligand>
        <name>substrate</name>
    </ligand>
</feature>
<feature type="binding site" evidence="1">
    <location>
        <position position="98"/>
    </location>
    <ligand>
        <name>substrate</name>
    </ligand>
</feature>
<feature type="binding site" evidence="1">
    <location>
        <begin position="120"/>
        <end position="122"/>
    </location>
    <ligand>
        <name>substrate</name>
    </ligand>
</feature>
<sequence>MKKHGVLNSEIAAVLASLGHTDTIVIADCGLPIPDGVKRIDLAVEIGKPSFLDVLQVVADDMAIEKVTLAEEVINNNAEVNKEIELKLIEPAFEYVCHEQFKEHTKKAKAIIRTGEATPYANVILHAGVIF</sequence>
<reference key="1">
    <citation type="submission" date="2008-10" db="EMBL/GenBank/DDBJ databases">
        <title>Genome sequence of Bacillus anthracis str. CDC 684.</title>
        <authorList>
            <person name="Dodson R.J."/>
            <person name="Munk A.C."/>
            <person name="Brettin T."/>
            <person name="Bruce D."/>
            <person name="Detter C."/>
            <person name="Tapia R."/>
            <person name="Han C."/>
            <person name="Sutton G."/>
            <person name="Sims D."/>
        </authorList>
    </citation>
    <scope>NUCLEOTIDE SEQUENCE [LARGE SCALE GENOMIC DNA]</scope>
    <source>
        <strain>CDC 684 / NRRL 3495</strain>
    </source>
</reference>
<organism>
    <name type="scientific">Bacillus anthracis (strain CDC 684 / NRRL 3495)</name>
    <dbReference type="NCBI Taxonomy" id="568206"/>
    <lineage>
        <taxon>Bacteria</taxon>
        <taxon>Bacillati</taxon>
        <taxon>Bacillota</taxon>
        <taxon>Bacilli</taxon>
        <taxon>Bacillales</taxon>
        <taxon>Bacillaceae</taxon>
        <taxon>Bacillus</taxon>
        <taxon>Bacillus cereus group</taxon>
    </lineage>
</organism>
<dbReference type="EC" id="5.4.99.62" evidence="1"/>
<dbReference type="EMBL" id="CP001215">
    <property type="protein sequence ID" value="ACP14976.1"/>
    <property type="molecule type" value="Genomic_DNA"/>
</dbReference>
<dbReference type="RefSeq" id="WP_000716140.1">
    <property type="nucleotide sequence ID" value="NC_012581.1"/>
</dbReference>
<dbReference type="SMR" id="C3LG97"/>
<dbReference type="GeneID" id="45020726"/>
<dbReference type="KEGG" id="bah:BAMEG_3920"/>
<dbReference type="HOGENOM" id="CLU_135498_0_0_9"/>
<dbReference type="UniPathway" id="UPA00916">
    <property type="reaction ID" value="UER00888"/>
</dbReference>
<dbReference type="GO" id="GO:0005829">
    <property type="term" value="C:cytosol"/>
    <property type="evidence" value="ECO:0007669"/>
    <property type="project" value="TreeGrafter"/>
</dbReference>
<dbReference type="GO" id="GO:0062193">
    <property type="term" value="F:D-ribose pyranase activity"/>
    <property type="evidence" value="ECO:0007669"/>
    <property type="project" value="UniProtKB-EC"/>
</dbReference>
<dbReference type="GO" id="GO:0016872">
    <property type="term" value="F:intramolecular lyase activity"/>
    <property type="evidence" value="ECO:0007669"/>
    <property type="project" value="UniProtKB-UniRule"/>
</dbReference>
<dbReference type="GO" id="GO:0048029">
    <property type="term" value="F:monosaccharide binding"/>
    <property type="evidence" value="ECO:0007669"/>
    <property type="project" value="InterPro"/>
</dbReference>
<dbReference type="GO" id="GO:0019303">
    <property type="term" value="P:D-ribose catabolic process"/>
    <property type="evidence" value="ECO:0007669"/>
    <property type="project" value="UniProtKB-UniRule"/>
</dbReference>
<dbReference type="FunFam" id="3.40.1650.10:FF:000003">
    <property type="entry name" value="D-ribose pyranase"/>
    <property type="match status" value="1"/>
</dbReference>
<dbReference type="Gene3D" id="3.40.1650.10">
    <property type="entry name" value="RbsD-like domain"/>
    <property type="match status" value="1"/>
</dbReference>
<dbReference type="HAMAP" id="MF_01661">
    <property type="entry name" value="D_rib_pyranase"/>
    <property type="match status" value="1"/>
</dbReference>
<dbReference type="InterPro" id="IPR023064">
    <property type="entry name" value="D-ribose_pyranase"/>
</dbReference>
<dbReference type="InterPro" id="IPR023750">
    <property type="entry name" value="RbsD-like_sf"/>
</dbReference>
<dbReference type="InterPro" id="IPR007721">
    <property type="entry name" value="RbsD_FucU"/>
</dbReference>
<dbReference type="NCBIfam" id="NF008761">
    <property type="entry name" value="PRK11797.1"/>
    <property type="match status" value="1"/>
</dbReference>
<dbReference type="PANTHER" id="PTHR37831">
    <property type="entry name" value="D-RIBOSE PYRANASE"/>
    <property type="match status" value="1"/>
</dbReference>
<dbReference type="PANTHER" id="PTHR37831:SF1">
    <property type="entry name" value="D-RIBOSE PYRANASE"/>
    <property type="match status" value="1"/>
</dbReference>
<dbReference type="Pfam" id="PF05025">
    <property type="entry name" value="RbsD_FucU"/>
    <property type="match status" value="1"/>
</dbReference>
<dbReference type="SUPFAM" id="SSF102546">
    <property type="entry name" value="RbsD-like"/>
    <property type="match status" value="1"/>
</dbReference>